<comment type="similarity">
    <text evidence="1">Belongs to the bacterial ribosomal protein bL28 family.</text>
</comment>
<feature type="chain" id="PRO_0000178492" description="Large ribosomal subunit protein bL28">
    <location>
        <begin position="1"/>
        <end position="78"/>
    </location>
</feature>
<dbReference type="EMBL" id="AE016822">
    <property type="protein sequence ID" value="AAT90108.1"/>
    <property type="molecule type" value="Genomic_DNA"/>
</dbReference>
<dbReference type="RefSeq" id="WP_011187087.1">
    <property type="nucleotide sequence ID" value="NC_006087.1"/>
</dbReference>
<dbReference type="SMR" id="Q6ABY4"/>
<dbReference type="STRING" id="281090.Lxx25000"/>
<dbReference type="KEGG" id="lxx:Lxx25000"/>
<dbReference type="eggNOG" id="COG0227">
    <property type="taxonomic scope" value="Bacteria"/>
</dbReference>
<dbReference type="HOGENOM" id="CLU_064548_3_1_11"/>
<dbReference type="Proteomes" id="UP000001306">
    <property type="component" value="Chromosome"/>
</dbReference>
<dbReference type="GO" id="GO:1990904">
    <property type="term" value="C:ribonucleoprotein complex"/>
    <property type="evidence" value="ECO:0007669"/>
    <property type="project" value="UniProtKB-KW"/>
</dbReference>
<dbReference type="GO" id="GO:0005840">
    <property type="term" value="C:ribosome"/>
    <property type="evidence" value="ECO:0007669"/>
    <property type="project" value="UniProtKB-KW"/>
</dbReference>
<dbReference type="GO" id="GO:0003735">
    <property type="term" value="F:structural constituent of ribosome"/>
    <property type="evidence" value="ECO:0007669"/>
    <property type="project" value="InterPro"/>
</dbReference>
<dbReference type="GO" id="GO:0006412">
    <property type="term" value="P:translation"/>
    <property type="evidence" value="ECO:0007669"/>
    <property type="project" value="UniProtKB-UniRule"/>
</dbReference>
<dbReference type="FunFam" id="2.30.170.40:FF:000001">
    <property type="entry name" value="50S ribosomal protein L28"/>
    <property type="match status" value="1"/>
</dbReference>
<dbReference type="Gene3D" id="2.30.170.40">
    <property type="entry name" value="Ribosomal protein L28/L24"/>
    <property type="match status" value="1"/>
</dbReference>
<dbReference type="HAMAP" id="MF_00373">
    <property type="entry name" value="Ribosomal_bL28"/>
    <property type="match status" value="1"/>
</dbReference>
<dbReference type="InterPro" id="IPR026569">
    <property type="entry name" value="Ribosomal_bL28"/>
</dbReference>
<dbReference type="InterPro" id="IPR034704">
    <property type="entry name" value="Ribosomal_bL28/bL31-like_sf"/>
</dbReference>
<dbReference type="InterPro" id="IPR001383">
    <property type="entry name" value="Ribosomal_bL28_bact-type"/>
</dbReference>
<dbReference type="InterPro" id="IPR037147">
    <property type="entry name" value="Ribosomal_bL28_sf"/>
</dbReference>
<dbReference type="NCBIfam" id="TIGR00009">
    <property type="entry name" value="L28"/>
    <property type="match status" value="1"/>
</dbReference>
<dbReference type="PANTHER" id="PTHR13528">
    <property type="entry name" value="39S RIBOSOMAL PROTEIN L28, MITOCHONDRIAL"/>
    <property type="match status" value="1"/>
</dbReference>
<dbReference type="PANTHER" id="PTHR13528:SF2">
    <property type="entry name" value="LARGE RIBOSOMAL SUBUNIT PROTEIN BL28M"/>
    <property type="match status" value="1"/>
</dbReference>
<dbReference type="Pfam" id="PF00830">
    <property type="entry name" value="Ribosomal_L28"/>
    <property type="match status" value="1"/>
</dbReference>
<dbReference type="SUPFAM" id="SSF143800">
    <property type="entry name" value="L28p-like"/>
    <property type="match status" value="1"/>
</dbReference>
<protein>
    <recommendedName>
        <fullName evidence="1">Large ribosomal subunit protein bL28</fullName>
    </recommendedName>
    <alternativeName>
        <fullName evidence="2">50S ribosomal protein L28</fullName>
    </alternativeName>
</protein>
<organism>
    <name type="scientific">Leifsonia xyli subsp. xyli (strain CTCB07)</name>
    <dbReference type="NCBI Taxonomy" id="281090"/>
    <lineage>
        <taxon>Bacteria</taxon>
        <taxon>Bacillati</taxon>
        <taxon>Actinomycetota</taxon>
        <taxon>Actinomycetes</taxon>
        <taxon>Micrococcales</taxon>
        <taxon>Microbacteriaceae</taxon>
        <taxon>Leifsonia</taxon>
    </lineage>
</organism>
<name>RL28_LEIXX</name>
<keyword id="KW-1185">Reference proteome</keyword>
<keyword id="KW-0687">Ribonucleoprotein</keyword>
<keyword id="KW-0689">Ribosomal protein</keyword>
<accession>Q6ABY4</accession>
<reference key="1">
    <citation type="journal article" date="2004" name="Mol. Plant Microbe Interact.">
        <title>The genome sequence of the Gram-positive sugarcane pathogen Leifsonia xyli subsp. xyli.</title>
        <authorList>
            <person name="Monteiro-Vitorello C.B."/>
            <person name="Camargo L.E.A."/>
            <person name="Van Sluys M.A."/>
            <person name="Kitajima J.P."/>
            <person name="Truffi D."/>
            <person name="do Amaral A.M."/>
            <person name="Harakava R."/>
            <person name="de Oliveira J.C.F."/>
            <person name="Wood D."/>
            <person name="de Oliveira M.C."/>
            <person name="Miyaki C.Y."/>
            <person name="Takita M.A."/>
            <person name="da Silva A.C.R."/>
            <person name="Furlan L.R."/>
            <person name="Carraro D.M."/>
            <person name="Camarotte G."/>
            <person name="Almeida N.F. Jr."/>
            <person name="Carrer H."/>
            <person name="Coutinho L.L."/>
            <person name="El-Dorry H.A."/>
            <person name="Ferro M.I.T."/>
            <person name="Gagliardi P.R."/>
            <person name="Giglioti E."/>
            <person name="Goldman M.H.S."/>
            <person name="Goldman G.H."/>
            <person name="Kimura E.T."/>
            <person name="Ferro E.S."/>
            <person name="Kuramae E.E."/>
            <person name="Lemos E.G.M."/>
            <person name="Lemos M.V.F."/>
            <person name="Mauro S.M.Z."/>
            <person name="Machado M.A."/>
            <person name="Marino C.L."/>
            <person name="Menck C.F."/>
            <person name="Nunes L.R."/>
            <person name="Oliveira R.C."/>
            <person name="Pereira G.G."/>
            <person name="Siqueira W."/>
            <person name="de Souza A.A."/>
            <person name="Tsai S.M."/>
            <person name="Zanca A.S."/>
            <person name="Simpson A.J.G."/>
            <person name="Brumbley S.M."/>
            <person name="Setubal J.C."/>
        </authorList>
    </citation>
    <scope>NUCLEOTIDE SEQUENCE [LARGE SCALE GENOMIC DNA]</scope>
    <source>
        <strain>CTCB07</strain>
    </source>
</reference>
<gene>
    <name evidence="1" type="primary">rpmB</name>
    <name type="ordered locus">Lxx25000</name>
</gene>
<proteinExistence type="inferred from homology"/>
<sequence>MAAVCQVTGATPGFGHSISHSHRRTKRRFDPNIQKKTYYVPSLRRNVTLTLSAKGIKVIDARGIEAVVKDLLARGEKI</sequence>
<evidence type="ECO:0000255" key="1">
    <source>
        <dbReference type="HAMAP-Rule" id="MF_00373"/>
    </source>
</evidence>
<evidence type="ECO:0000305" key="2"/>